<keyword id="KW-0002">3D-structure</keyword>
<keyword id="KW-0025">Alternative splicing</keyword>
<keyword id="KW-1003">Cell membrane</keyword>
<keyword id="KW-0967">Endosome</keyword>
<keyword id="KW-0472">Membrane</keyword>
<keyword id="KW-0597">Phosphoprotein</keyword>
<keyword id="KW-1267">Proteomics identification</keyword>
<keyword id="KW-1185">Reference proteome</keyword>
<name>FLOT1_HUMAN</name>
<feature type="chain" id="PRO_0000094044" description="Flotillin-1">
    <location>
        <begin position="1"/>
        <end position="427"/>
    </location>
</feature>
<feature type="modified residue" description="Phosphoserine" evidence="8 11">
    <location>
        <position position="19"/>
    </location>
</feature>
<feature type="modified residue" description="Phosphoserine" evidence="10">
    <location>
        <position position="163"/>
    </location>
</feature>
<feature type="modified residue" description="Phosphoserine" evidence="9 10 11">
    <location>
        <position position="385"/>
    </location>
</feature>
<feature type="modified residue" description="Phosphothreonine" evidence="10">
    <location>
        <position position="387"/>
    </location>
</feature>
<feature type="splice variant" id="VSP_056227" description="In isoform 2." evidence="6">
    <location>
        <begin position="71"/>
        <end position="118"/>
    </location>
</feature>
<feature type="sequence variant" id="VAR_048415" description="In dbSNP:rs3180825.">
    <original>S</original>
    <variation>N</variation>
    <location>
        <position position="52"/>
    </location>
</feature>
<feature type="sequence conflict" description="In Ref. 2; AAD40192 and 7; AAF17215." evidence="7" ref="2 7">
    <original>H</original>
    <variation>N</variation>
    <location>
        <position position="114"/>
    </location>
</feature>
<feature type="sequence conflict" description="In Ref. 7; AAF17215." evidence="7" ref="7">
    <original>EEQR</original>
    <variation>DFSQ</variation>
    <location>
        <begin position="250"/>
        <end position="253"/>
    </location>
</feature>
<accession>O75955</accession>
<accession>B4DVY7</accession>
<accession>Q969J8</accession>
<accession>Q9UHW1</accession>
<accession>Q9UNV8</accession>
<gene>
    <name type="primary">FLOT1</name>
</gene>
<organism>
    <name type="scientific">Homo sapiens</name>
    <name type="common">Human</name>
    <dbReference type="NCBI Taxonomy" id="9606"/>
    <lineage>
        <taxon>Eukaryota</taxon>
        <taxon>Metazoa</taxon>
        <taxon>Chordata</taxon>
        <taxon>Craniata</taxon>
        <taxon>Vertebrata</taxon>
        <taxon>Euteleostomi</taxon>
        <taxon>Mammalia</taxon>
        <taxon>Eutheria</taxon>
        <taxon>Euarchontoglires</taxon>
        <taxon>Primates</taxon>
        <taxon>Haplorrhini</taxon>
        <taxon>Catarrhini</taxon>
        <taxon>Hominidae</taxon>
        <taxon>Homo</taxon>
    </lineage>
</organism>
<proteinExistence type="evidence at protein level"/>
<evidence type="ECO:0000250" key="1"/>
<evidence type="ECO:0000250" key="2">
    <source>
        <dbReference type="UniProtKB" id="O08917"/>
    </source>
</evidence>
<evidence type="ECO:0000269" key="3">
    <source>
    </source>
</evidence>
<evidence type="ECO:0000269" key="4">
    <source>
    </source>
</evidence>
<evidence type="ECO:0000269" key="5">
    <source>
    </source>
</evidence>
<evidence type="ECO:0000303" key="6">
    <source>
    </source>
</evidence>
<evidence type="ECO:0000305" key="7"/>
<evidence type="ECO:0007744" key="8">
    <source>
    </source>
</evidence>
<evidence type="ECO:0007744" key="9">
    <source>
    </source>
</evidence>
<evidence type="ECO:0007744" key="10">
    <source>
    </source>
</evidence>
<evidence type="ECO:0007744" key="11">
    <source>
    </source>
</evidence>
<sequence>MFFTCGPNEAMVVSGFCRSPPVMVAGGRVFVLPCIQQIQRISLNTLTLNVKSEKVYTRHGVPISVTGIAQVKIQGQNKEMLAAACQMFLGKTEAEIAHIALETLEGHQRAIMAHMTVEEIYKDRQKFSEQVFKVASSDLVNMGISVVSYTLKDIHDDQDYLHSLGKARTAQVQKDARIGEAEAKRDAGIREAKAKQEKVSAQYLSEIEMAKAQRDYELKKAAYDIEVNTRRAQADLAYQLQVAKTKQQIEEQRVQVQVVERAQQVAVQEQEIARREKELEARVRKPAEAERYKLERLAEAEKSQLIMQAEAEAASVRMRGEAEAFAIGARARAEAEQMAKKAEAFQLYQEAAQLDMLLEKLPQVAEEISGPLTSANKITLVSSGSGTMGAAKVTGEVLDILTRLPESVERLTGVSISQVNHKPLRTA</sequence>
<reference key="1">
    <citation type="journal article" date="2001" name="Int. J. Biochem. Cell Biol.">
        <title>Flotillin-1: gene structure: cDNA cloning from human lung and the identification of alternative polyadenylation signals.</title>
        <authorList>
            <person name="Edgar A.J."/>
            <person name="Polak J.M."/>
        </authorList>
    </citation>
    <scope>NUCLEOTIDE SEQUENCE [MRNA] (ISOFORM 1)</scope>
    <source>
        <tissue>Lung</tissue>
    </source>
</reference>
<reference key="2">
    <citation type="journal article" date="2000" name="Genome Res.">
        <title>Cloning and functional analysis of cDNAs with open reading frames for 300 previously undefined genes expressed in CD34+ hematopoietic stem/progenitor cells.</title>
        <authorList>
            <person name="Zhang Q.-H."/>
            <person name="Ye M."/>
            <person name="Wu X.-Y."/>
            <person name="Ren S.-X."/>
            <person name="Zhao M."/>
            <person name="Zhao C.-J."/>
            <person name="Fu G."/>
            <person name="Shen Y."/>
            <person name="Fan H.-Y."/>
            <person name="Lu G."/>
            <person name="Zhong M."/>
            <person name="Xu X.-R."/>
            <person name="Han Z.-G."/>
            <person name="Zhang J.-W."/>
            <person name="Tao J."/>
            <person name="Huang Q.-H."/>
            <person name="Zhou J."/>
            <person name="Hu G.-X."/>
            <person name="Gu J."/>
            <person name="Chen S.-J."/>
            <person name="Chen Z."/>
        </authorList>
    </citation>
    <scope>NUCLEOTIDE SEQUENCE [LARGE SCALE MRNA] (ISOFORM 1)</scope>
    <source>
        <tissue>Umbilical cord blood</tissue>
    </source>
</reference>
<reference key="3">
    <citation type="submission" date="1999-09" db="EMBL/GenBank/DDBJ databases">
        <title>Homo sapiens 2,229,817bp genomic DNA of 6p21.3 HLA class I region.</title>
        <authorList>
            <person name="Shiina S."/>
            <person name="Tamiya G."/>
            <person name="Oka A."/>
            <person name="Inoko H."/>
        </authorList>
    </citation>
    <scope>NUCLEOTIDE SEQUENCE [LARGE SCALE GENOMIC DNA]</scope>
</reference>
<reference key="4">
    <citation type="journal article" date="2004" name="Nat. Genet.">
        <title>Complete sequencing and characterization of 21,243 full-length human cDNAs.</title>
        <authorList>
            <person name="Ota T."/>
            <person name="Suzuki Y."/>
            <person name="Nishikawa T."/>
            <person name="Otsuki T."/>
            <person name="Sugiyama T."/>
            <person name="Irie R."/>
            <person name="Wakamatsu A."/>
            <person name="Hayashi K."/>
            <person name="Sato H."/>
            <person name="Nagai K."/>
            <person name="Kimura K."/>
            <person name="Makita H."/>
            <person name="Sekine M."/>
            <person name="Obayashi M."/>
            <person name="Nishi T."/>
            <person name="Shibahara T."/>
            <person name="Tanaka T."/>
            <person name="Ishii S."/>
            <person name="Yamamoto J."/>
            <person name="Saito K."/>
            <person name="Kawai Y."/>
            <person name="Isono Y."/>
            <person name="Nakamura Y."/>
            <person name="Nagahari K."/>
            <person name="Murakami K."/>
            <person name="Yasuda T."/>
            <person name="Iwayanagi T."/>
            <person name="Wagatsuma M."/>
            <person name="Shiratori A."/>
            <person name="Sudo H."/>
            <person name="Hosoiri T."/>
            <person name="Kaku Y."/>
            <person name="Kodaira H."/>
            <person name="Kondo H."/>
            <person name="Sugawara M."/>
            <person name="Takahashi M."/>
            <person name="Kanda K."/>
            <person name="Yokoi T."/>
            <person name="Furuya T."/>
            <person name="Kikkawa E."/>
            <person name="Omura Y."/>
            <person name="Abe K."/>
            <person name="Kamihara K."/>
            <person name="Katsuta N."/>
            <person name="Sato K."/>
            <person name="Tanikawa M."/>
            <person name="Yamazaki M."/>
            <person name="Ninomiya K."/>
            <person name="Ishibashi T."/>
            <person name="Yamashita H."/>
            <person name="Murakawa K."/>
            <person name="Fujimori K."/>
            <person name="Tanai H."/>
            <person name="Kimata M."/>
            <person name="Watanabe M."/>
            <person name="Hiraoka S."/>
            <person name="Chiba Y."/>
            <person name="Ishida S."/>
            <person name="Ono Y."/>
            <person name="Takiguchi S."/>
            <person name="Watanabe S."/>
            <person name="Yosida M."/>
            <person name="Hotuta T."/>
            <person name="Kusano J."/>
            <person name="Kanehori K."/>
            <person name="Takahashi-Fujii A."/>
            <person name="Hara H."/>
            <person name="Tanase T.-O."/>
            <person name="Nomura Y."/>
            <person name="Togiya S."/>
            <person name="Komai F."/>
            <person name="Hara R."/>
            <person name="Takeuchi K."/>
            <person name="Arita M."/>
            <person name="Imose N."/>
            <person name="Musashino K."/>
            <person name="Yuuki H."/>
            <person name="Oshima A."/>
            <person name="Sasaki N."/>
            <person name="Aotsuka S."/>
            <person name="Yoshikawa Y."/>
            <person name="Matsunawa H."/>
            <person name="Ichihara T."/>
            <person name="Shiohata N."/>
            <person name="Sano S."/>
            <person name="Moriya S."/>
            <person name="Momiyama H."/>
            <person name="Satoh N."/>
            <person name="Takami S."/>
            <person name="Terashima Y."/>
            <person name="Suzuki O."/>
            <person name="Nakagawa S."/>
            <person name="Senoh A."/>
            <person name="Mizoguchi H."/>
            <person name="Goto Y."/>
            <person name="Shimizu F."/>
            <person name="Wakebe H."/>
            <person name="Hishigaki H."/>
            <person name="Watanabe T."/>
            <person name="Sugiyama A."/>
            <person name="Takemoto M."/>
            <person name="Kawakami B."/>
            <person name="Yamazaki M."/>
            <person name="Watanabe K."/>
            <person name="Kumagai A."/>
            <person name="Itakura S."/>
            <person name="Fukuzumi Y."/>
            <person name="Fujimori Y."/>
            <person name="Komiyama M."/>
            <person name="Tashiro H."/>
            <person name="Tanigami A."/>
            <person name="Fujiwara T."/>
            <person name="Ono T."/>
            <person name="Yamada K."/>
            <person name="Fujii Y."/>
            <person name="Ozaki K."/>
            <person name="Hirao M."/>
            <person name="Ohmori Y."/>
            <person name="Kawabata A."/>
            <person name="Hikiji T."/>
            <person name="Kobatake N."/>
            <person name="Inagaki H."/>
            <person name="Ikema Y."/>
            <person name="Okamoto S."/>
            <person name="Okitani R."/>
            <person name="Kawakami T."/>
            <person name="Noguchi S."/>
            <person name="Itoh T."/>
            <person name="Shigeta K."/>
            <person name="Senba T."/>
            <person name="Matsumura K."/>
            <person name="Nakajima Y."/>
            <person name="Mizuno T."/>
            <person name="Morinaga M."/>
            <person name="Sasaki M."/>
            <person name="Togashi T."/>
            <person name="Oyama M."/>
            <person name="Hata H."/>
            <person name="Watanabe M."/>
            <person name="Komatsu T."/>
            <person name="Mizushima-Sugano J."/>
            <person name="Satoh T."/>
            <person name="Shirai Y."/>
            <person name="Takahashi Y."/>
            <person name="Nakagawa K."/>
            <person name="Okumura K."/>
            <person name="Nagase T."/>
            <person name="Nomura N."/>
            <person name="Kikuchi H."/>
            <person name="Masuho Y."/>
            <person name="Yamashita R."/>
            <person name="Nakai K."/>
            <person name="Yada T."/>
            <person name="Nakamura Y."/>
            <person name="Ohara O."/>
            <person name="Isogai T."/>
            <person name="Sugano S."/>
        </authorList>
    </citation>
    <scope>NUCLEOTIDE SEQUENCE [LARGE SCALE MRNA] (ISOFORM 2)</scope>
    <source>
        <tissue>Stomach</tissue>
    </source>
</reference>
<reference key="5">
    <citation type="journal article" date="2003" name="Nature">
        <title>The DNA sequence and analysis of human chromosome 6.</title>
        <authorList>
            <person name="Mungall A.J."/>
            <person name="Palmer S.A."/>
            <person name="Sims S.K."/>
            <person name="Edwards C.A."/>
            <person name="Ashurst J.L."/>
            <person name="Wilming L."/>
            <person name="Jones M.C."/>
            <person name="Horton R."/>
            <person name="Hunt S.E."/>
            <person name="Scott C.E."/>
            <person name="Gilbert J.G.R."/>
            <person name="Clamp M.E."/>
            <person name="Bethel G."/>
            <person name="Milne S."/>
            <person name="Ainscough R."/>
            <person name="Almeida J.P."/>
            <person name="Ambrose K.D."/>
            <person name="Andrews T.D."/>
            <person name="Ashwell R.I.S."/>
            <person name="Babbage A.K."/>
            <person name="Bagguley C.L."/>
            <person name="Bailey J."/>
            <person name="Banerjee R."/>
            <person name="Barker D.J."/>
            <person name="Barlow K.F."/>
            <person name="Bates K."/>
            <person name="Beare D.M."/>
            <person name="Beasley H."/>
            <person name="Beasley O."/>
            <person name="Bird C.P."/>
            <person name="Blakey S.E."/>
            <person name="Bray-Allen S."/>
            <person name="Brook J."/>
            <person name="Brown A.J."/>
            <person name="Brown J.Y."/>
            <person name="Burford D.C."/>
            <person name="Burrill W."/>
            <person name="Burton J."/>
            <person name="Carder C."/>
            <person name="Carter N.P."/>
            <person name="Chapman J.C."/>
            <person name="Clark S.Y."/>
            <person name="Clark G."/>
            <person name="Clee C.M."/>
            <person name="Clegg S."/>
            <person name="Cobley V."/>
            <person name="Collier R.E."/>
            <person name="Collins J.E."/>
            <person name="Colman L.K."/>
            <person name="Corby N.R."/>
            <person name="Coville G.J."/>
            <person name="Culley K.M."/>
            <person name="Dhami P."/>
            <person name="Davies J."/>
            <person name="Dunn M."/>
            <person name="Earthrowl M.E."/>
            <person name="Ellington A.E."/>
            <person name="Evans K.A."/>
            <person name="Faulkner L."/>
            <person name="Francis M.D."/>
            <person name="Frankish A."/>
            <person name="Frankland J."/>
            <person name="French L."/>
            <person name="Garner P."/>
            <person name="Garnett J."/>
            <person name="Ghori M.J."/>
            <person name="Gilby L.M."/>
            <person name="Gillson C.J."/>
            <person name="Glithero R.J."/>
            <person name="Grafham D.V."/>
            <person name="Grant M."/>
            <person name="Gribble S."/>
            <person name="Griffiths C."/>
            <person name="Griffiths M.N.D."/>
            <person name="Hall R."/>
            <person name="Halls K.S."/>
            <person name="Hammond S."/>
            <person name="Harley J.L."/>
            <person name="Hart E.A."/>
            <person name="Heath P.D."/>
            <person name="Heathcott R."/>
            <person name="Holmes S.J."/>
            <person name="Howden P.J."/>
            <person name="Howe K.L."/>
            <person name="Howell G.R."/>
            <person name="Huckle E."/>
            <person name="Humphray S.J."/>
            <person name="Humphries M.D."/>
            <person name="Hunt A.R."/>
            <person name="Johnson C.M."/>
            <person name="Joy A.A."/>
            <person name="Kay M."/>
            <person name="Keenan S.J."/>
            <person name="Kimberley A.M."/>
            <person name="King A."/>
            <person name="Laird G.K."/>
            <person name="Langford C."/>
            <person name="Lawlor S."/>
            <person name="Leongamornlert D.A."/>
            <person name="Leversha M."/>
            <person name="Lloyd C.R."/>
            <person name="Lloyd D.M."/>
            <person name="Loveland J.E."/>
            <person name="Lovell J."/>
            <person name="Martin S."/>
            <person name="Mashreghi-Mohammadi M."/>
            <person name="Maslen G.L."/>
            <person name="Matthews L."/>
            <person name="McCann O.T."/>
            <person name="McLaren S.J."/>
            <person name="McLay K."/>
            <person name="McMurray A."/>
            <person name="Moore M.J.F."/>
            <person name="Mullikin J.C."/>
            <person name="Niblett D."/>
            <person name="Nickerson T."/>
            <person name="Novik K.L."/>
            <person name="Oliver K."/>
            <person name="Overton-Larty E.K."/>
            <person name="Parker A."/>
            <person name="Patel R."/>
            <person name="Pearce A.V."/>
            <person name="Peck A.I."/>
            <person name="Phillimore B.J.C.T."/>
            <person name="Phillips S."/>
            <person name="Plumb R.W."/>
            <person name="Porter K.M."/>
            <person name="Ramsey Y."/>
            <person name="Ranby S.A."/>
            <person name="Rice C.M."/>
            <person name="Ross M.T."/>
            <person name="Searle S.M."/>
            <person name="Sehra H.K."/>
            <person name="Sheridan E."/>
            <person name="Skuce C.D."/>
            <person name="Smith S."/>
            <person name="Smith M."/>
            <person name="Spraggon L."/>
            <person name="Squares S.L."/>
            <person name="Steward C.A."/>
            <person name="Sycamore N."/>
            <person name="Tamlyn-Hall G."/>
            <person name="Tester J."/>
            <person name="Theaker A.J."/>
            <person name="Thomas D.W."/>
            <person name="Thorpe A."/>
            <person name="Tracey A."/>
            <person name="Tromans A."/>
            <person name="Tubby B."/>
            <person name="Wall M."/>
            <person name="Wallis J.M."/>
            <person name="West A.P."/>
            <person name="White S.S."/>
            <person name="Whitehead S.L."/>
            <person name="Whittaker H."/>
            <person name="Wild A."/>
            <person name="Willey D.J."/>
            <person name="Wilmer T.E."/>
            <person name="Wood J.M."/>
            <person name="Wray P.W."/>
            <person name="Wyatt J.C."/>
            <person name="Young L."/>
            <person name="Younger R.M."/>
            <person name="Bentley D.R."/>
            <person name="Coulson A."/>
            <person name="Durbin R.M."/>
            <person name="Hubbard T."/>
            <person name="Sulston J.E."/>
            <person name="Dunham I."/>
            <person name="Rogers J."/>
            <person name="Beck S."/>
        </authorList>
    </citation>
    <scope>NUCLEOTIDE SEQUENCE [LARGE SCALE GENOMIC DNA]</scope>
</reference>
<reference key="6">
    <citation type="journal article" date="2004" name="Genome Res.">
        <title>The status, quality, and expansion of the NIH full-length cDNA project: the Mammalian Gene Collection (MGC).</title>
        <authorList>
            <consortium name="The MGC Project Team"/>
        </authorList>
    </citation>
    <scope>NUCLEOTIDE SEQUENCE [LARGE SCALE MRNA] (ISOFORM 1)</scope>
    <source>
        <tissue>Lung</tissue>
    </source>
</reference>
<reference key="7">
    <citation type="journal article" date="2000" name="Proc. Natl. Acad. Sci. U.S.A.">
        <title>Gene expression profiling in the human hypothalamus-pituitary-adrenal axis and full-length cDNA cloning.</title>
        <authorList>
            <person name="Hu R.-M."/>
            <person name="Han Z.-G."/>
            <person name="Song H.-D."/>
            <person name="Peng Y.-D."/>
            <person name="Huang Q.-H."/>
            <person name="Ren S.-X."/>
            <person name="Gu Y.-J."/>
            <person name="Huang C.-H."/>
            <person name="Li Y.-B."/>
            <person name="Jiang C.-L."/>
            <person name="Fu G."/>
            <person name="Zhang Q.-H."/>
            <person name="Gu B.-W."/>
            <person name="Dai M."/>
            <person name="Mao Y.-F."/>
            <person name="Gao G.-F."/>
            <person name="Rong R."/>
            <person name="Ye M."/>
            <person name="Zhou J."/>
            <person name="Xu S.-H."/>
            <person name="Gu J."/>
            <person name="Shi J.-X."/>
            <person name="Jin W.-R."/>
            <person name="Zhang C.-K."/>
            <person name="Wu T.-M."/>
            <person name="Huang G.-Y."/>
            <person name="Chen Z."/>
            <person name="Chen M.-D."/>
            <person name="Chen J.-L."/>
        </authorList>
    </citation>
    <scope>NUCLEOTIDE SEQUENCE [LARGE SCALE MRNA] OF 1-253 (ISOFORM 1)</scope>
    <source>
        <tissue>Adrenal gland</tissue>
    </source>
</reference>
<reference key="8">
    <citation type="journal article" date="2006" name="J. Proteome Res.">
        <title>Proteomic and bioinformatic characterization of the biogenesis and function of melanosomes.</title>
        <authorList>
            <person name="Chi A."/>
            <person name="Valencia J.C."/>
            <person name="Hu Z.-Z."/>
            <person name="Watabe H."/>
            <person name="Yamaguchi H."/>
            <person name="Mangini N.J."/>
            <person name="Huang H."/>
            <person name="Canfield V.A."/>
            <person name="Cheng K.C."/>
            <person name="Yang F."/>
            <person name="Abe R."/>
            <person name="Yamagishi S."/>
            <person name="Shabanowitz J."/>
            <person name="Hearing V.J."/>
            <person name="Wu C."/>
            <person name="Appella E."/>
            <person name="Hunt D.F."/>
        </authorList>
    </citation>
    <scope>SUBCELLULAR LOCATION [LARGE SCALE ANALYSIS]</scope>
    <source>
        <tissue>Melanoma</tissue>
    </source>
</reference>
<reference key="9">
    <citation type="journal article" date="2008" name="Mol. Cell">
        <title>Kinase-selective enrichment enables quantitative phosphoproteomics of the kinome across the cell cycle.</title>
        <authorList>
            <person name="Daub H."/>
            <person name="Olsen J.V."/>
            <person name="Bairlein M."/>
            <person name="Gnad F."/>
            <person name="Oppermann F.S."/>
            <person name="Korner R."/>
            <person name="Greff Z."/>
            <person name="Keri G."/>
            <person name="Stemmann O."/>
            <person name="Mann M."/>
        </authorList>
    </citation>
    <scope>PHOSPHORYLATION [LARGE SCALE ANALYSIS] AT SER-19</scope>
    <scope>IDENTIFICATION BY MASS SPECTROMETRY [LARGE SCALE ANALYSIS]</scope>
    <source>
        <tissue>Cervix carcinoma</tissue>
    </source>
</reference>
<reference key="10">
    <citation type="journal article" date="2008" name="Proc. Natl. Acad. Sci. U.S.A.">
        <title>A quantitative atlas of mitotic phosphorylation.</title>
        <authorList>
            <person name="Dephoure N."/>
            <person name="Zhou C."/>
            <person name="Villen J."/>
            <person name="Beausoleil S.A."/>
            <person name="Bakalarski C.E."/>
            <person name="Elledge S.J."/>
            <person name="Gygi S.P."/>
        </authorList>
    </citation>
    <scope>IDENTIFICATION BY MASS SPECTROMETRY [LARGE SCALE ANALYSIS]</scope>
    <source>
        <tissue>Cervix carcinoma</tissue>
    </source>
</reference>
<reference key="11">
    <citation type="journal article" date="2009" name="Sci. Signal.">
        <title>Quantitative phosphoproteomic analysis of T cell receptor signaling reveals system-wide modulation of protein-protein interactions.</title>
        <authorList>
            <person name="Mayya V."/>
            <person name="Lundgren D.H."/>
            <person name="Hwang S.-I."/>
            <person name="Rezaul K."/>
            <person name="Wu L."/>
            <person name="Eng J.K."/>
            <person name="Rodionov V."/>
            <person name="Han D.K."/>
        </authorList>
    </citation>
    <scope>PHOSPHORYLATION [LARGE SCALE ANALYSIS] AT SER-385</scope>
    <scope>IDENTIFICATION BY MASS SPECTROMETRY [LARGE SCALE ANALYSIS]</scope>
    <source>
        <tissue>Leukemic T-cell</tissue>
    </source>
</reference>
<reference key="12">
    <citation type="journal article" date="2010" name="J. Biol. Chem.">
        <title>A protein interaction network for Ecm29 links the 26 S proteasome to molecular motors and endosomal components.</title>
        <authorList>
            <person name="Gorbea C."/>
            <person name="Pratt G."/>
            <person name="Ustrell V."/>
            <person name="Bell R."/>
            <person name="Sahasrabudhe S."/>
            <person name="Hughes R.E."/>
            <person name="Rechsteiner M."/>
        </authorList>
    </citation>
    <scope>SUBCELLULAR LOCATION</scope>
    <scope>INTERACTION WITH ECPAS</scope>
</reference>
<reference key="13">
    <citation type="journal article" date="2011" name="BMC Syst. Biol.">
        <title>Initial characterization of the human central proteome.</title>
        <authorList>
            <person name="Burkard T.R."/>
            <person name="Planyavsky M."/>
            <person name="Kaupe I."/>
            <person name="Breitwieser F.P."/>
            <person name="Buerckstuemmer T."/>
            <person name="Bennett K.L."/>
            <person name="Superti-Furga G."/>
            <person name="Colinge J."/>
        </authorList>
    </citation>
    <scope>IDENTIFICATION BY MASS SPECTROMETRY [LARGE SCALE ANALYSIS]</scope>
</reference>
<reference key="14">
    <citation type="journal article" date="2013" name="J. Proteome Res.">
        <title>Toward a comprehensive characterization of a human cancer cell phosphoproteome.</title>
        <authorList>
            <person name="Zhou H."/>
            <person name="Di Palma S."/>
            <person name="Preisinger C."/>
            <person name="Peng M."/>
            <person name="Polat A.N."/>
            <person name="Heck A.J."/>
            <person name="Mohammed S."/>
        </authorList>
    </citation>
    <scope>PHOSPHORYLATION [LARGE SCALE ANALYSIS] AT SER-163; SER-385 AND THR-387</scope>
    <scope>IDENTIFICATION BY MASS SPECTROMETRY [LARGE SCALE ANALYSIS]</scope>
    <source>
        <tissue>Cervix carcinoma</tissue>
        <tissue>Erythroleukemia</tissue>
    </source>
</reference>
<reference key="15">
    <citation type="journal article" date="2014" name="J. Proteomics">
        <title>An enzyme assisted RP-RPLC approach for in-depth analysis of human liver phosphoproteome.</title>
        <authorList>
            <person name="Bian Y."/>
            <person name="Song C."/>
            <person name="Cheng K."/>
            <person name="Dong M."/>
            <person name="Wang F."/>
            <person name="Huang J."/>
            <person name="Sun D."/>
            <person name="Wang L."/>
            <person name="Ye M."/>
            <person name="Zou H."/>
        </authorList>
    </citation>
    <scope>PHOSPHORYLATION [LARGE SCALE ANALYSIS] AT SER-19 AND SER-385</scope>
    <scope>IDENTIFICATION BY MASS SPECTROMETRY [LARGE SCALE ANALYSIS]</scope>
    <source>
        <tissue>Liver</tissue>
    </source>
</reference>
<reference key="16">
    <citation type="journal article" date="2015" name="Proteomics">
        <title>N-terminome analysis of the human mitochondrial proteome.</title>
        <authorList>
            <person name="Vaca Jacome A.S."/>
            <person name="Rabilloud T."/>
            <person name="Schaeffer-Reiss C."/>
            <person name="Rompais M."/>
            <person name="Ayoub D."/>
            <person name="Lane L."/>
            <person name="Bairoch A."/>
            <person name="Van Dorsselaer A."/>
            <person name="Carapito C."/>
        </authorList>
    </citation>
    <scope>IDENTIFICATION BY MASS SPECTROMETRY [LARGE SCALE ANALYSIS]</scope>
</reference>
<reference key="17">
    <citation type="journal article" date="2016" name="Oncogene">
        <title>Syntenin regulates TGF-beta1-induced Smad activation and the epithelial-to-mesenchymal transition by inhibiting caveolin-mediated TGF-beta type I receptor internalization.</title>
        <authorList>
            <person name="Hwangbo C."/>
            <person name="Tae N."/>
            <person name="Lee S."/>
            <person name="Kim O."/>
            <person name="Park O.K."/>
            <person name="Kim J."/>
            <person name="Kwon S.H."/>
            <person name="Lee J.H."/>
        </authorList>
    </citation>
    <scope>SUBCELLULAR LOCATION</scope>
</reference>
<comment type="function">
    <text>May act as a scaffolding protein within caveolar membranes, functionally participating in formation of caveolae or caveolae-like vesicles.</text>
</comment>
<comment type="subunit">
    <text evidence="1 4">Heterooligomeric complex of flotillin-1 and flotillin-2 and caveolin-1 and caveolin-2 (By similarity). Interacts with ECPAS.</text>
</comment>
<comment type="interaction">
    <interactant intactId="EBI-603643">
        <id>O75955</id>
    </interactant>
    <interactant intactId="EBI-77613">
        <id>P05067</id>
        <label>APP</label>
    </interactant>
    <organismsDiffer>false</organismsDiffer>
    <experiments>5</experiments>
</comment>
<comment type="interaction">
    <interactant intactId="EBI-603643">
        <id>O75955</id>
    </interactant>
    <interactant intactId="EBI-11524452">
        <id>Q8N9N5-2</id>
        <label>BANP</label>
    </interactant>
    <organismsDiffer>false</organismsDiffer>
    <experiments>3</experiments>
</comment>
<comment type="interaction">
    <interactant intactId="EBI-603643">
        <id>O75955</id>
    </interactant>
    <interactant intactId="EBI-10171570">
        <id>Q68D86</id>
        <label>CCDC102B</label>
    </interactant>
    <organismsDiffer>false</organismsDiffer>
    <experiments>3</experiments>
</comment>
<comment type="interaction">
    <interactant intactId="EBI-603643">
        <id>O75955</id>
    </interactant>
    <interactant intactId="EBI-1053725">
        <id>P10606</id>
        <label>COX5B</label>
    </interactant>
    <organismsDiffer>false</organismsDiffer>
    <experiments>3</experiments>
</comment>
<comment type="interaction">
    <interactant intactId="EBI-603643">
        <id>O75955</id>
    </interactant>
    <interactant intactId="EBI-3907816">
        <id>P54852</id>
        <label>EMP3</label>
    </interactant>
    <organismsDiffer>false</organismsDiffer>
    <experiments>3</experiments>
</comment>
<comment type="interaction">
    <interactant intactId="EBI-603643">
        <id>O75955</id>
    </interactant>
    <interactant intactId="EBI-6658203">
        <id>Q86YD7</id>
        <label>FAM90A1</label>
    </interactant>
    <organismsDiffer>false</organismsDiffer>
    <experiments>3</experiments>
</comment>
<comment type="interaction">
    <interactant intactId="EBI-603643">
        <id>O75955</id>
    </interactant>
    <interactant intactId="EBI-348613">
        <id>Q14254</id>
        <label>FLOT2</label>
    </interactant>
    <organismsDiffer>false</organismsDiffer>
    <experiments>6</experiments>
</comment>
<comment type="interaction">
    <interactant intactId="EBI-603643">
        <id>O75955</id>
    </interactant>
    <interactant intactId="EBI-466029">
        <id>P42858</id>
        <label>HTT</label>
    </interactant>
    <organismsDiffer>false</organismsDiffer>
    <experiments>4</experiments>
</comment>
<comment type="interaction">
    <interactant intactId="EBI-603643">
        <id>O75955</id>
    </interactant>
    <interactant intactId="EBI-744782">
        <id>Q9Y5B8</id>
        <label>NME7</label>
    </interactant>
    <organismsDiffer>false</organismsDiffer>
    <experiments>3</experiments>
</comment>
<comment type="subcellular location">
    <subcellularLocation>
        <location>Cell membrane</location>
        <topology evidence="4">Peripheral membrane protein</topology>
    </subcellularLocation>
    <subcellularLocation>
        <location evidence="4">Endosome</location>
    </subcellularLocation>
    <subcellularLocation>
        <location evidence="2">Membrane</location>
        <location evidence="2">Caveola</location>
        <topology evidence="2">Peripheral membrane protein</topology>
    </subcellularLocation>
    <subcellularLocation>
        <location evidence="3">Melanosome</location>
    </subcellularLocation>
    <subcellularLocation>
        <location evidence="5">Membrane raft</location>
    </subcellularLocation>
    <text evidence="2 3">Identified by mass spectrometry in melanosome fractions from stage I to stage IV (PubMed:17081065). Membrane-associated protein of caveola (By similarity).</text>
</comment>
<comment type="alternative products">
    <event type="alternative splicing"/>
    <isoform>
        <id>O75955-1</id>
        <name>1</name>
        <sequence type="displayed"/>
    </isoform>
    <isoform>
        <id>O75955-2</id>
        <name>2</name>
        <sequence type="described" ref="VSP_056227"/>
    </isoform>
</comment>
<comment type="similarity">
    <text evidence="7">Belongs to the band 7/mec-2 family. Flotillin subfamily.</text>
</comment>
<protein>
    <recommendedName>
        <fullName>Flotillin-1</fullName>
    </recommendedName>
</protein>
<dbReference type="EMBL" id="AF089750">
    <property type="protein sequence ID" value="AAC35387.1"/>
    <property type="molecule type" value="mRNA"/>
</dbReference>
<dbReference type="EMBL" id="AF085357">
    <property type="protein sequence ID" value="AAD40192.1"/>
    <property type="molecule type" value="mRNA"/>
</dbReference>
<dbReference type="EMBL" id="BA000025">
    <property type="protein sequence ID" value="BAB63320.1"/>
    <property type="molecule type" value="Genomic_DNA"/>
</dbReference>
<dbReference type="EMBL" id="AK301291">
    <property type="protein sequence ID" value="BAG62849.1"/>
    <property type="molecule type" value="mRNA"/>
</dbReference>
<dbReference type="EMBL" id="AL662797">
    <property type="status" value="NOT_ANNOTATED_CDS"/>
    <property type="molecule type" value="Genomic_DNA"/>
</dbReference>
<dbReference type="EMBL" id="BC001146">
    <property type="protein sequence ID" value="AAH01146.1"/>
    <property type="molecule type" value="mRNA"/>
</dbReference>
<dbReference type="EMBL" id="AF117234">
    <property type="protein sequence ID" value="AAF17215.1"/>
    <property type="molecule type" value="mRNA"/>
</dbReference>
<dbReference type="CCDS" id="CCDS4688.1">
    <molecule id="O75955-1"/>
</dbReference>
<dbReference type="RefSeq" id="NP_001305804.1">
    <molecule id="O75955-2"/>
    <property type="nucleotide sequence ID" value="NM_001318875.2"/>
</dbReference>
<dbReference type="RefSeq" id="NP_005794.1">
    <molecule id="O75955-1"/>
    <property type="nucleotide sequence ID" value="NM_005803.4"/>
</dbReference>
<dbReference type="RefSeq" id="XP_005248837.1">
    <molecule id="O75955-1"/>
    <property type="nucleotide sequence ID" value="XM_005248780.4"/>
</dbReference>
<dbReference type="RefSeq" id="XP_054187244.1">
    <molecule id="O75955-1"/>
    <property type="nucleotide sequence ID" value="XM_054331269.1"/>
</dbReference>
<dbReference type="RefSeq" id="XP_054209977.1">
    <molecule id="O75955-1"/>
    <property type="nucleotide sequence ID" value="XM_054354002.1"/>
</dbReference>
<dbReference type="PDB" id="9BQ2">
    <property type="method" value="EM"/>
    <property type="resolution" value="3.50 A"/>
    <property type="chains" value="B=1-422"/>
</dbReference>
<dbReference type="PDBsum" id="9BQ2"/>
<dbReference type="EMDB" id="EMD-44792"/>
<dbReference type="SMR" id="O75955"/>
<dbReference type="BioGRID" id="115506">
    <property type="interactions" value="526"/>
</dbReference>
<dbReference type="CORUM" id="O75955"/>
<dbReference type="FunCoup" id="O75955">
    <property type="interactions" value="1265"/>
</dbReference>
<dbReference type="IntAct" id="O75955">
    <property type="interactions" value="167"/>
</dbReference>
<dbReference type="MINT" id="O75955"/>
<dbReference type="STRING" id="9606.ENSP00000365569"/>
<dbReference type="ChEMBL" id="CHEMBL5209841"/>
<dbReference type="TCDB" id="8.A.21.3.1">
    <property type="family name" value="the stomatin/podocin/band 7/nephrosis,2/spfh (stomatin) family"/>
</dbReference>
<dbReference type="GlyGen" id="O75955">
    <property type="glycosylation" value="1 site, 1 O-linked glycan (1 site)"/>
</dbReference>
<dbReference type="iPTMnet" id="O75955"/>
<dbReference type="MetOSite" id="O75955"/>
<dbReference type="PhosphoSitePlus" id="O75955"/>
<dbReference type="SwissPalm" id="O75955"/>
<dbReference type="BioMuta" id="FLOT1"/>
<dbReference type="jPOST" id="O75955"/>
<dbReference type="MassIVE" id="O75955"/>
<dbReference type="PaxDb" id="9606-ENSP00000365569"/>
<dbReference type="PeptideAtlas" id="O75955"/>
<dbReference type="ProteomicsDB" id="50321">
    <molecule id="O75955-1"/>
</dbReference>
<dbReference type="ProteomicsDB" id="5302"/>
<dbReference type="Pumba" id="O75955"/>
<dbReference type="Antibodypedia" id="655">
    <property type="antibodies" value="423 antibodies from 38 providers"/>
</dbReference>
<dbReference type="DNASU" id="10211"/>
<dbReference type="Ensembl" id="ENST00000376389.8">
    <molecule id="O75955-1"/>
    <property type="protein sequence ID" value="ENSP00000365569.3"/>
    <property type="gene ID" value="ENSG00000137312.15"/>
</dbReference>
<dbReference type="Ensembl" id="ENST00000383382.8">
    <molecule id="O75955-1"/>
    <property type="protein sequence ID" value="ENSP00000372873.4"/>
    <property type="gene ID" value="ENSG00000206379.12"/>
</dbReference>
<dbReference type="Ensembl" id="ENST00000383562.8">
    <molecule id="O75955-1"/>
    <property type="protein sequence ID" value="ENSP00000373056.4"/>
    <property type="gene ID" value="ENSG00000206480.11"/>
</dbReference>
<dbReference type="Ensembl" id="ENST00000436822.6">
    <molecule id="O75955-1"/>
    <property type="protein sequence ID" value="ENSP00000391438.2"/>
    <property type="gene ID" value="ENSG00000232280.9"/>
</dbReference>
<dbReference type="Ensembl" id="ENST00000444632.6">
    <molecule id="O75955-1"/>
    <property type="protein sequence ID" value="ENSP00000388861.2"/>
    <property type="gene ID" value="ENSG00000230143.9"/>
</dbReference>
<dbReference type="GeneID" id="10211"/>
<dbReference type="KEGG" id="hsa:10211"/>
<dbReference type="MANE-Select" id="ENST00000376389.8">
    <property type="protein sequence ID" value="ENSP00000365569.3"/>
    <property type="RefSeq nucleotide sequence ID" value="NM_005803.4"/>
    <property type="RefSeq protein sequence ID" value="NP_005794.1"/>
</dbReference>
<dbReference type="AGR" id="HGNC:3757"/>
<dbReference type="CTD" id="10211"/>
<dbReference type="DisGeNET" id="10211"/>
<dbReference type="GeneCards" id="FLOT1"/>
<dbReference type="HGNC" id="HGNC:3757">
    <property type="gene designation" value="FLOT1"/>
</dbReference>
<dbReference type="HPA" id="ENSG00000137312">
    <property type="expression patterns" value="Low tissue specificity"/>
</dbReference>
<dbReference type="MIM" id="606998">
    <property type="type" value="gene"/>
</dbReference>
<dbReference type="neXtProt" id="NX_O75955"/>
<dbReference type="OpenTargets" id="ENSG00000137312"/>
<dbReference type="PharmGKB" id="PA28175"/>
<dbReference type="VEuPathDB" id="HostDB:ENSG00000137312"/>
<dbReference type="eggNOG" id="KOG2668">
    <property type="taxonomic scope" value="Eukaryota"/>
</dbReference>
<dbReference type="GeneTree" id="ENSGT00560000077232"/>
<dbReference type="InParanoid" id="O75955"/>
<dbReference type="OMA" id="AFQIQDI"/>
<dbReference type="OrthoDB" id="6080404at2759"/>
<dbReference type="PAN-GO" id="O75955">
    <property type="GO annotations" value="9 GO annotations based on evolutionary models"/>
</dbReference>
<dbReference type="PhylomeDB" id="O75955"/>
<dbReference type="TreeFam" id="TF324879"/>
<dbReference type="PathwayCommons" id="O75955"/>
<dbReference type="Reactome" id="R-HSA-5213460">
    <property type="pathway name" value="RIPK1-mediated regulated necrosis"/>
</dbReference>
<dbReference type="Reactome" id="R-HSA-5675482">
    <property type="pathway name" value="Regulation of necroptotic cell death"/>
</dbReference>
<dbReference type="Reactome" id="R-HSA-8849932">
    <property type="pathway name" value="Synaptic adhesion-like molecules"/>
</dbReference>
<dbReference type="Reactome" id="R-HSA-8980692">
    <property type="pathway name" value="RHOA GTPase cycle"/>
</dbReference>
<dbReference type="Reactome" id="R-HSA-9013026">
    <property type="pathway name" value="RHOB GTPase cycle"/>
</dbReference>
<dbReference type="Reactome" id="R-HSA-9013106">
    <property type="pathway name" value="RHOC GTPase cycle"/>
</dbReference>
<dbReference type="SignaLink" id="O75955"/>
<dbReference type="SIGNOR" id="O75955"/>
<dbReference type="BioGRID-ORCS" id="10211">
    <property type="hits" value="37 hits in 1155 CRISPR screens"/>
</dbReference>
<dbReference type="CD-CODE" id="FB4E32DD">
    <property type="entry name" value="Presynaptic clusters and postsynaptic densities"/>
</dbReference>
<dbReference type="ChiTaRS" id="FLOT1">
    <property type="organism name" value="human"/>
</dbReference>
<dbReference type="GeneWiki" id="FLOT1"/>
<dbReference type="GenomeRNAi" id="10211"/>
<dbReference type="Pharos" id="O75955">
    <property type="development level" value="Tbio"/>
</dbReference>
<dbReference type="PRO" id="PR:O75955"/>
<dbReference type="Proteomes" id="UP000005640">
    <property type="component" value="Chromosome 6"/>
</dbReference>
<dbReference type="RNAct" id="O75955">
    <property type="molecule type" value="protein"/>
</dbReference>
<dbReference type="Bgee" id="ENSG00000137312">
    <property type="expression patterns" value="Expressed in right adrenal gland and 102 other cell types or tissues"/>
</dbReference>
<dbReference type="ExpressionAtlas" id="O75955">
    <property type="expression patterns" value="baseline and differential"/>
</dbReference>
<dbReference type="GO" id="GO:0005912">
    <property type="term" value="C:adherens junction"/>
    <property type="evidence" value="ECO:0000314"/>
    <property type="project" value="UniProtKB"/>
</dbReference>
<dbReference type="GO" id="GO:0016323">
    <property type="term" value="C:basolateral plasma membrane"/>
    <property type="evidence" value="ECO:0000314"/>
    <property type="project" value="UniProtKB"/>
</dbReference>
<dbReference type="GO" id="GO:0005901">
    <property type="term" value="C:caveola"/>
    <property type="evidence" value="ECO:0000304"/>
    <property type="project" value="ProtInc"/>
</dbReference>
<dbReference type="GO" id="GO:0044291">
    <property type="term" value="C:cell-cell contact zone"/>
    <property type="evidence" value="ECO:0000314"/>
    <property type="project" value="UniProtKB"/>
</dbReference>
<dbReference type="GO" id="GO:0005911">
    <property type="term" value="C:cell-cell junction"/>
    <property type="evidence" value="ECO:0000314"/>
    <property type="project" value="BHF-UCL"/>
</dbReference>
<dbReference type="GO" id="GO:0034451">
    <property type="term" value="C:centriolar satellite"/>
    <property type="evidence" value="ECO:0000314"/>
    <property type="project" value="BHF-UCL"/>
</dbReference>
<dbReference type="GO" id="GO:0031410">
    <property type="term" value="C:cytoplasmic vesicle"/>
    <property type="evidence" value="ECO:0000314"/>
    <property type="project" value="UniProtKB"/>
</dbReference>
<dbReference type="GO" id="GO:0098691">
    <property type="term" value="C:dopaminergic synapse"/>
    <property type="evidence" value="ECO:0000314"/>
    <property type="project" value="SynGO"/>
</dbReference>
<dbReference type="GO" id="GO:0005769">
    <property type="term" value="C:early endosome"/>
    <property type="evidence" value="ECO:0000314"/>
    <property type="project" value="UniProtKB"/>
</dbReference>
<dbReference type="GO" id="GO:0005768">
    <property type="term" value="C:endosome"/>
    <property type="evidence" value="ECO:0000314"/>
    <property type="project" value="UniProtKB"/>
</dbReference>
<dbReference type="GO" id="GO:0009897">
    <property type="term" value="C:external side of plasma membrane"/>
    <property type="evidence" value="ECO:0007669"/>
    <property type="project" value="Ensembl"/>
</dbReference>
<dbReference type="GO" id="GO:0070062">
    <property type="term" value="C:extracellular exosome"/>
    <property type="evidence" value="ECO:0007005"/>
    <property type="project" value="UniProtKB"/>
</dbReference>
<dbReference type="GO" id="GO:0016600">
    <property type="term" value="C:flotillin complex"/>
    <property type="evidence" value="ECO:0000314"/>
    <property type="project" value="UniProtKB"/>
</dbReference>
<dbReference type="GO" id="GO:0005925">
    <property type="term" value="C:focal adhesion"/>
    <property type="evidence" value="ECO:0007005"/>
    <property type="project" value="UniProtKB"/>
</dbReference>
<dbReference type="GO" id="GO:0098982">
    <property type="term" value="C:GABA-ergic synapse"/>
    <property type="evidence" value="ECO:0007669"/>
    <property type="project" value="Ensembl"/>
</dbReference>
<dbReference type="GO" id="GO:0098978">
    <property type="term" value="C:glutamatergic synapse"/>
    <property type="evidence" value="ECO:0007669"/>
    <property type="project" value="Ensembl"/>
</dbReference>
<dbReference type="GO" id="GO:0030027">
    <property type="term" value="C:lamellipodium"/>
    <property type="evidence" value="ECO:0000314"/>
    <property type="project" value="UniProtKB"/>
</dbReference>
<dbReference type="GO" id="GO:0005765">
    <property type="term" value="C:lysosomal membrane"/>
    <property type="evidence" value="ECO:0007005"/>
    <property type="project" value="UniProtKB"/>
</dbReference>
<dbReference type="GO" id="GO:0042470">
    <property type="term" value="C:melanosome"/>
    <property type="evidence" value="ECO:0007669"/>
    <property type="project" value="UniProtKB-SubCell"/>
</dbReference>
<dbReference type="GO" id="GO:0016020">
    <property type="term" value="C:membrane"/>
    <property type="evidence" value="ECO:0007005"/>
    <property type="project" value="UniProtKB"/>
</dbReference>
<dbReference type="GO" id="GO:0045121">
    <property type="term" value="C:membrane raft"/>
    <property type="evidence" value="ECO:0000314"/>
    <property type="project" value="UniProtKB"/>
</dbReference>
<dbReference type="GO" id="GO:0005815">
    <property type="term" value="C:microtubule organizing center"/>
    <property type="evidence" value="ECO:0000314"/>
    <property type="project" value="BHF-UCL"/>
</dbReference>
<dbReference type="GO" id="GO:0005886">
    <property type="term" value="C:plasma membrane"/>
    <property type="evidence" value="ECO:0000314"/>
    <property type="project" value="UniProtKB"/>
</dbReference>
<dbReference type="GO" id="GO:0048786">
    <property type="term" value="C:presynaptic active zone"/>
    <property type="evidence" value="ECO:0007669"/>
    <property type="project" value="Ensembl"/>
</dbReference>
<dbReference type="GO" id="GO:0042383">
    <property type="term" value="C:sarcolemma"/>
    <property type="evidence" value="ECO:0007669"/>
    <property type="project" value="Ensembl"/>
</dbReference>
<dbReference type="GO" id="GO:0001931">
    <property type="term" value="C:uropod"/>
    <property type="evidence" value="ECO:0000314"/>
    <property type="project" value="UniProtKB"/>
</dbReference>
<dbReference type="GO" id="GO:0035255">
    <property type="term" value="F:ionotropic glutamate receptor binding"/>
    <property type="evidence" value="ECO:0007669"/>
    <property type="project" value="Ensembl"/>
</dbReference>
<dbReference type="GO" id="GO:0002020">
    <property type="term" value="F:protease binding"/>
    <property type="evidence" value="ECO:0000353"/>
    <property type="project" value="UniProtKB"/>
</dbReference>
<dbReference type="GO" id="GO:0007409">
    <property type="term" value="P:axonogenesis"/>
    <property type="evidence" value="ECO:0007669"/>
    <property type="project" value="Ensembl"/>
</dbReference>
<dbReference type="GO" id="GO:0071360">
    <property type="term" value="P:cellular response to exogenous dsRNA"/>
    <property type="evidence" value="ECO:0000315"/>
    <property type="project" value="UniProtKB"/>
</dbReference>
<dbReference type="GO" id="GO:0033227">
    <property type="term" value="P:dsRNA transport"/>
    <property type="evidence" value="ECO:0000315"/>
    <property type="project" value="UniProtKB"/>
</dbReference>
<dbReference type="GO" id="GO:0022617">
    <property type="term" value="P:extracellular matrix disassembly"/>
    <property type="evidence" value="ECO:0000315"/>
    <property type="project" value="UniProtKB"/>
</dbReference>
<dbReference type="GO" id="GO:0035556">
    <property type="term" value="P:intracellular signal transduction"/>
    <property type="evidence" value="ECO:0000315"/>
    <property type="project" value="UniProtKB"/>
</dbReference>
<dbReference type="GO" id="GO:0044854">
    <property type="term" value="P:plasma membrane raft assembly"/>
    <property type="evidence" value="ECO:0000315"/>
    <property type="project" value="UniProtKB"/>
</dbReference>
<dbReference type="GO" id="GO:0044857">
    <property type="term" value="P:plasma membrane raft organization"/>
    <property type="evidence" value="ECO:0000315"/>
    <property type="project" value="GO_Central"/>
</dbReference>
<dbReference type="GO" id="GO:0043123">
    <property type="term" value="P:positive regulation of canonical NF-kappaB signal transduction"/>
    <property type="evidence" value="ECO:0000315"/>
    <property type="project" value="ARUK-UCL"/>
</dbReference>
<dbReference type="GO" id="GO:1901890">
    <property type="term" value="P:positive regulation of cell junction assembly"/>
    <property type="evidence" value="ECO:0000315"/>
    <property type="project" value="UniProtKB"/>
</dbReference>
<dbReference type="GO" id="GO:2000049">
    <property type="term" value="P:positive regulation of cell-cell adhesion mediated by cadherin"/>
    <property type="evidence" value="ECO:0000315"/>
    <property type="project" value="UniProtKB"/>
</dbReference>
<dbReference type="GO" id="GO:0001819">
    <property type="term" value="P:positive regulation of cytokine production"/>
    <property type="evidence" value="ECO:0000315"/>
    <property type="project" value="UniProtKB"/>
</dbReference>
<dbReference type="GO" id="GO:0045807">
    <property type="term" value="P:positive regulation of endocytosis"/>
    <property type="evidence" value="ECO:0000315"/>
    <property type="project" value="UniProtKB"/>
</dbReference>
<dbReference type="GO" id="GO:0034116">
    <property type="term" value="P:positive regulation of heterotypic cell-cell adhesion"/>
    <property type="evidence" value="ECO:0000315"/>
    <property type="project" value="UniProtKB"/>
</dbReference>
<dbReference type="GO" id="GO:0032728">
    <property type="term" value="P:positive regulation of interferon-beta production"/>
    <property type="evidence" value="ECO:0000315"/>
    <property type="project" value="UniProtKB"/>
</dbReference>
<dbReference type="GO" id="GO:1901741">
    <property type="term" value="P:positive regulation of myoblast fusion"/>
    <property type="evidence" value="ECO:0000315"/>
    <property type="project" value="UniProtKB"/>
</dbReference>
<dbReference type="GO" id="GO:0032092">
    <property type="term" value="P:positive regulation of protein binding"/>
    <property type="evidence" value="ECO:0000315"/>
    <property type="project" value="UniProtKB"/>
</dbReference>
<dbReference type="GO" id="GO:0001934">
    <property type="term" value="P:positive regulation of protein phosphorylation"/>
    <property type="evidence" value="ECO:0000315"/>
    <property type="project" value="UniProtKB"/>
</dbReference>
<dbReference type="GO" id="GO:0048643">
    <property type="term" value="P:positive regulation of skeletal muscle tissue development"/>
    <property type="evidence" value="ECO:0000315"/>
    <property type="project" value="UniProtKB"/>
</dbReference>
<dbReference type="GO" id="GO:0032226">
    <property type="term" value="P:positive regulation of synaptic transmission, dopaminergic"/>
    <property type="evidence" value="ECO:0000250"/>
    <property type="project" value="UniProtKB"/>
</dbReference>
<dbReference type="GO" id="GO:0034141">
    <property type="term" value="P:positive regulation of toll-like receptor 3 signaling pathway"/>
    <property type="evidence" value="ECO:0000315"/>
    <property type="project" value="UniProtKB"/>
</dbReference>
<dbReference type="GO" id="GO:0072659">
    <property type="term" value="P:protein localization to plasma membrane"/>
    <property type="evidence" value="ECO:0000315"/>
    <property type="project" value="UniProtKB"/>
</dbReference>
<dbReference type="GO" id="GO:0050821">
    <property type="term" value="P:protein stabilization"/>
    <property type="evidence" value="ECO:0000315"/>
    <property type="project" value="UniProtKB"/>
</dbReference>
<dbReference type="GO" id="GO:0051580">
    <property type="term" value="P:regulation of neurotransmitter uptake"/>
    <property type="evidence" value="ECO:0000314"/>
    <property type="project" value="SynGO"/>
</dbReference>
<dbReference type="GO" id="GO:0002090">
    <property type="term" value="P:regulation of receptor internalization"/>
    <property type="evidence" value="ECO:0000315"/>
    <property type="project" value="UniProtKB"/>
</dbReference>
<dbReference type="GO" id="GO:0035023">
    <property type="term" value="P:regulation of Rho protein signal transduction"/>
    <property type="evidence" value="ECO:0007669"/>
    <property type="project" value="Ensembl"/>
</dbReference>
<dbReference type="GO" id="GO:0034976">
    <property type="term" value="P:response to endoplasmic reticulum stress"/>
    <property type="evidence" value="ECO:0000315"/>
    <property type="project" value="UniProtKB"/>
</dbReference>
<dbReference type="CDD" id="cd03399">
    <property type="entry name" value="SPFH_flotillin"/>
    <property type="match status" value="1"/>
</dbReference>
<dbReference type="FunFam" id="3.30.479.30:FF:000003">
    <property type="entry name" value="Flotillin 2"/>
    <property type="match status" value="1"/>
</dbReference>
<dbReference type="Gene3D" id="3.30.479.30">
    <property type="entry name" value="Band 7 domain"/>
    <property type="match status" value="1"/>
</dbReference>
<dbReference type="InterPro" id="IPR001107">
    <property type="entry name" value="Band_7"/>
</dbReference>
<dbReference type="InterPro" id="IPR036013">
    <property type="entry name" value="Band_7/SPFH_dom_sf"/>
</dbReference>
<dbReference type="InterPro" id="IPR027705">
    <property type="entry name" value="Flotillin_fam"/>
</dbReference>
<dbReference type="PANTHER" id="PTHR13806:SF46">
    <property type="entry name" value="FLOTILLIN-1-RELATED"/>
    <property type="match status" value="1"/>
</dbReference>
<dbReference type="PANTHER" id="PTHR13806">
    <property type="entry name" value="FLOTILLIN-RELATED"/>
    <property type="match status" value="1"/>
</dbReference>
<dbReference type="Pfam" id="PF01145">
    <property type="entry name" value="Band_7"/>
    <property type="match status" value="1"/>
</dbReference>
<dbReference type="SMART" id="SM00244">
    <property type="entry name" value="PHB"/>
    <property type="match status" value="1"/>
</dbReference>
<dbReference type="SUPFAM" id="SSF117892">
    <property type="entry name" value="Band 7/SPFH domain"/>
    <property type="match status" value="1"/>
</dbReference>